<dbReference type="EC" id="6.3.2.9" evidence="1"/>
<dbReference type="EMBL" id="CP001095">
    <property type="protein sequence ID" value="ACJ51956.1"/>
    <property type="molecule type" value="Genomic_DNA"/>
</dbReference>
<dbReference type="EMBL" id="AP010889">
    <property type="protein sequence ID" value="BAJ68463.1"/>
    <property type="status" value="ALT_INIT"/>
    <property type="molecule type" value="Genomic_DNA"/>
</dbReference>
<dbReference type="RefSeq" id="WP_012577229.1">
    <property type="nucleotide sequence ID" value="NC_011593.1"/>
</dbReference>
<dbReference type="SMR" id="B7GQ76"/>
<dbReference type="KEGG" id="bln:Blon_0854"/>
<dbReference type="KEGG" id="blon:BLIJ_0871"/>
<dbReference type="PATRIC" id="fig|391904.8.peg.878"/>
<dbReference type="HOGENOM" id="CLU_032540_0_0_11"/>
<dbReference type="UniPathway" id="UPA00219"/>
<dbReference type="Proteomes" id="UP000001360">
    <property type="component" value="Chromosome"/>
</dbReference>
<dbReference type="GO" id="GO:0005737">
    <property type="term" value="C:cytoplasm"/>
    <property type="evidence" value="ECO:0007669"/>
    <property type="project" value="UniProtKB-SubCell"/>
</dbReference>
<dbReference type="GO" id="GO:0005524">
    <property type="term" value="F:ATP binding"/>
    <property type="evidence" value="ECO:0007669"/>
    <property type="project" value="UniProtKB-UniRule"/>
</dbReference>
<dbReference type="GO" id="GO:0008764">
    <property type="term" value="F:UDP-N-acetylmuramoylalanine-D-glutamate ligase activity"/>
    <property type="evidence" value="ECO:0007669"/>
    <property type="project" value="UniProtKB-UniRule"/>
</dbReference>
<dbReference type="GO" id="GO:0051301">
    <property type="term" value="P:cell division"/>
    <property type="evidence" value="ECO:0007669"/>
    <property type="project" value="UniProtKB-KW"/>
</dbReference>
<dbReference type="GO" id="GO:0071555">
    <property type="term" value="P:cell wall organization"/>
    <property type="evidence" value="ECO:0007669"/>
    <property type="project" value="UniProtKB-KW"/>
</dbReference>
<dbReference type="GO" id="GO:0009252">
    <property type="term" value="P:peptidoglycan biosynthetic process"/>
    <property type="evidence" value="ECO:0007669"/>
    <property type="project" value="UniProtKB-UniRule"/>
</dbReference>
<dbReference type="GO" id="GO:0008360">
    <property type="term" value="P:regulation of cell shape"/>
    <property type="evidence" value="ECO:0007669"/>
    <property type="project" value="UniProtKB-KW"/>
</dbReference>
<dbReference type="Gene3D" id="3.90.190.20">
    <property type="entry name" value="Mur ligase, C-terminal domain"/>
    <property type="match status" value="1"/>
</dbReference>
<dbReference type="Gene3D" id="3.40.1190.10">
    <property type="entry name" value="Mur-like, catalytic domain"/>
    <property type="match status" value="1"/>
</dbReference>
<dbReference type="Gene3D" id="3.40.50.720">
    <property type="entry name" value="NAD(P)-binding Rossmann-like Domain"/>
    <property type="match status" value="1"/>
</dbReference>
<dbReference type="HAMAP" id="MF_00639">
    <property type="entry name" value="MurD"/>
    <property type="match status" value="1"/>
</dbReference>
<dbReference type="InterPro" id="IPR036565">
    <property type="entry name" value="Mur-like_cat_sf"/>
</dbReference>
<dbReference type="InterPro" id="IPR004101">
    <property type="entry name" value="Mur_ligase_C"/>
</dbReference>
<dbReference type="InterPro" id="IPR036615">
    <property type="entry name" value="Mur_ligase_C_dom_sf"/>
</dbReference>
<dbReference type="InterPro" id="IPR013221">
    <property type="entry name" value="Mur_ligase_cen"/>
</dbReference>
<dbReference type="InterPro" id="IPR005762">
    <property type="entry name" value="MurD"/>
</dbReference>
<dbReference type="NCBIfam" id="TIGR01087">
    <property type="entry name" value="murD"/>
    <property type="match status" value="1"/>
</dbReference>
<dbReference type="PANTHER" id="PTHR43692">
    <property type="entry name" value="UDP-N-ACETYLMURAMOYLALANINE--D-GLUTAMATE LIGASE"/>
    <property type="match status" value="1"/>
</dbReference>
<dbReference type="PANTHER" id="PTHR43692:SF1">
    <property type="entry name" value="UDP-N-ACETYLMURAMOYLALANINE--D-GLUTAMATE LIGASE"/>
    <property type="match status" value="1"/>
</dbReference>
<dbReference type="Pfam" id="PF02875">
    <property type="entry name" value="Mur_ligase_C"/>
    <property type="match status" value="1"/>
</dbReference>
<dbReference type="Pfam" id="PF08245">
    <property type="entry name" value="Mur_ligase_M"/>
    <property type="match status" value="1"/>
</dbReference>
<dbReference type="SUPFAM" id="SSF51984">
    <property type="entry name" value="MurCD N-terminal domain"/>
    <property type="match status" value="1"/>
</dbReference>
<dbReference type="SUPFAM" id="SSF53623">
    <property type="entry name" value="MurD-like peptide ligases, catalytic domain"/>
    <property type="match status" value="1"/>
</dbReference>
<dbReference type="SUPFAM" id="SSF53244">
    <property type="entry name" value="MurD-like peptide ligases, peptide-binding domain"/>
    <property type="match status" value="1"/>
</dbReference>
<keyword id="KW-0067">ATP-binding</keyword>
<keyword id="KW-0131">Cell cycle</keyword>
<keyword id="KW-0132">Cell division</keyword>
<keyword id="KW-0133">Cell shape</keyword>
<keyword id="KW-0961">Cell wall biogenesis/degradation</keyword>
<keyword id="KW-0963">Cytoplasm</keyword>
<keyword id="KW-0436">Ligase</keyword>
<keyword id="KW-0547">Nucleotide-binding</keyword>
<keyword id="KW-0573">Peptidoglycan synthesis</keyword>
<reference key="1">
    <citation type="journal article" date="2008" name="Proc. Natl. Acad. Sci. U.S.A.">
        <title>The genome sequence of Bifidobacterium longum subsp. infantis reveals adaptations for milk utilization within the infant microbiome.</title>
        <authorList>
            <person name="Sela D.A."/>
            <person name="Chapman J."/>
            <person name="Adeuya A."/>
            <person name="Kim J.H."/>
            <person name="Chen F."/>
            <person name="Whitehead T.R."/>
            <person name="Lapidus A."/>
            <person name="Rokhsar D.S."/>
            <person name="Lebrilla C.B."/>
            <person name="German J.B."/>
            <person name="Price N.P."/>
            <person name="Richardson P.M."/>
            <person name="Mills D.A."/>
        </authorList>
    </citation>
    <scope>NUCLEOTIDE SEQUENCE [LARGE SCALE GENOMIC DNA]</scope>
    <source>
        <strain>ATCC 15697 / DSM 20088 / JCM 1222 / NCTC 11817 / S12</strain>
    </source>
</reference>
<reference key="2">
    <citation type="journal article" date="2011" name="Nature">
        <title>Bifidobacteria can protect from enteropathogenic infection through production of acetate.</title>
        <authorList>
            <person name="Fukuda S."/>
            <person name="Toh H."/>
            <person name="Hase K."/>
            <person name="Oshima K."/>
            <person name="Nakanishi Y."/>
            <person name="Yoshimura K."/>
            <person name="Tobe T."/>
            <person name="Clarke J.M."/>
            <person name="Topping D.L."/>
            <person name="Suzuki T."/>
            <person name="Taylor T.D."/>
            <person name="Itoh K."/>
            <person name="Kikuchi J."/>
            <person name="Morita H."/>
            <person name="Hattori M."/>
            <person name="Ohno H."/>
        </authorList>
    </citation>
    <scope>NUCLEOTIDE SEQUENCE [LARGE SCALE GENOMIC DNA]</scope>
    <source>
        <strain>ATCC 15697 / DSM 20088 / JCM 1222 / NCTC 11817 / S12</strain>
    </source>
</reference>
<organism>
    <name type="scientific">Bifidobacterium longum subsp. infantis (strain ATCC 15697 / DSM 20088 / JCM 1222 / NCTC 11817 / S12)</name>
    <dbReference type="NCBI Taxonomy" id="391904"/>
    <lineage>
        <taxon>Bacteria</taxon>
        <taxon>Bacillati</taxon>
        <taxon>Actinomycetota</taxon>
        <taxon>Actinomycetes</taxon>
        <taxon>Bifidobacteriales</taxon>
        <taxon>Bifidobacteriaceae</taxon>
        <taxon>Bifidobacterium</taxon>
    </lineage>
</organism>
<gene>
    <name evidence="1" type="primary">murD</name>
    <name type="ordered locus">Blon_0854</name>
    <name type="ordered locus">BLIJ_0871</name>
</gene>
<name>MURD_BIFLS</name>
<comment type="function">
    <text evidence="1">Cell wall formation. Catalyzes the addition of glutamate to the nucleotide precursor UDP-N-acetylmuramoyl-L-alanine (UMA).</text>
</comment>
<comment type="catalytic activity">
    <reaction evidence="1">
        <text>UDP-N-acetyl-alpha-D-muramoyl-L-alanine + D-glutamate + ATP = UDP-N-acetyl-alpha-D-muramoyl-L-alanyl-D-glutamate + ADP + phosphate + H(+)</text>
        <dbReference type="Rhea" id="RHEA:16429"/>
        <dbReference type="ChEBI" id="CHEBI:15378"/>
        <dbReference type="ChEBI" id="CHEBI:29986"/>
        <dbReference type="ChEBI" id="CHEBI:30616"/>
        <dbReference type="ChEBI" id="CHEBI:43474"/>
        <dbReference type="ChEBI" id="CHEBI:83898"/>
        <dbReference type="ChEBI" id="CHEBI:83900"/>
        <dbReference type="ChEBI" id="CHEBI:456216"/>
        <dbReference type="EC" id="6.3.2.9"/>
    </reaction>
</comment>
<comment type="pathway">
    <text evidence="1">Cell wall biogenesis; peptidoglycan biosynthesis.</text>
</comment>
<comment type="subcellular location">
    <subcellularLocation>
        <location evidence="1">Cytoplasm</location>
    </subcellularLocation>
</comment>
<comment type="similarity">
    <text evidence="1">Belongs to the MurCDEF family.</text>
</comment>
<comment type="sequence caution" evidence="2">
    <conflict type="erroneous initiation">
        <sequence resource="EMBL-CDS" id="BAJ68463"/>
    </conflict>
    <text>Extended N-terminus.</text>
</comment>
<proteinExistence type="inferred from homology"/>
<feature type="chain" id="PRO_1000147395" description="UDP-N-acetylmuramoylalanine--D-glutamate ligase">
    <location>
        <begin position="1"/>
        <end position="481"/>
    </location>
</feature>
<feature type="binding site" evidence="1">
    <location>
        <begin position="108"/>
        <end position="114"/>
    </location>
    <ligand>
        <name>ATP</name>
        <dbReference type="ChEBI" id="CHEBI:30616"/>
    </ligand>
</feature>
<sequence>MQVADKTVVIAGLGVSGTSLAEVLRERGAHVIGVDERKPEADLRSFDDVDWDHVDYVMSSPVFNPRTPFVLEAQRRGIPVMSEVEFAWQLRVNNERTGTPAPWIGITGTNGKTSTTEMTSEMLTACGLDAPTAGNIASGDMSMSLSRCATNPQHDVLCVELSSFQLHFTDSLALDCAAITNIADDHLDWHGGRENYAADKSKVFHNAKHAIVYNAQDAKVSELAAEAQTAEGCRKVGFTLEAPQAGQIGIEDGWIVDRSGVAGGAVGEPVRLAAITDFTHLAEPDGSLYPHLVADALTALALVLGLGADRDTALKALTSFKPGGHRIETVAEAVVEGGSVRFVDDSKATNGHAARASLSSFPAKSVIWIAGGLAKGSRFEDLVKDQAHTIKAAVIIGKDQQPMIEAFASQAPDIPVTIIDPEDNDTVMDRAVEACGTYAAAGDIVLMAPACASMDQFKSYADRGNRFAAAAKTWSEVHGLH</sequence>
<accession>B7GQ76</accession>
<accession>E8MR38</accession>
<evidence type="ECO:0000255" key="1">
    <source>
        <dbReference type="HAMAP-Rule" id="MF_00639"/>
    </source>
</evidence>
<evidence type="ECO:0000305" key="2"/>
<protein>
    <recommendedName>
        <fullName evidence="1">UDP-N-acetylmuramoylalanine--D-glutamate ligase</fullName>
        <ecNumber evidence="1">6.3.2.9</ecNumber>
    </recommendedName>
    <alternativeName>
        <fullName evidence="1">D-glutamic acid-adding enzyme</fullName>
    </alternativeName>
    <alternativeName>
        <fullName evidence="1">UDP-N-acetylmuramoyl-L-alanyl-D-glutamate synthetase</fullName>
    </alternativeName>
</protein>